<feature type="chain" id="PRO_0000152225" description="NH(3)-dependent NAD(+) synthetase">
    <location>
        <begin position="1"/>
        <end position="284"/>
    </location>
</feature>
<feature type="region of interest" description="Disordered" evidence="2">
    <location>
        <begin position="264"/>
        <end position="284"/>
    </location>
</feature>
<feature type="compositionally biased region" description="Acidic residues" evidence="2">
    <location>
        <begin position="275"/>
        <end position="284"/>
    </location>
</feature>
<feature type="binding site" evidence="1">
    <location>
        <begin position="41"/>
        <end position="48"/>
    </location>
    <ligand>
        <name>ATP</name>
        <dbReference type="ChEBI" id="CHEBI:30616"/>
    </ligand>
</feature>
<feature type="binding site" evidence="1">
    <location>
        <position position="47"/>
    </location>
    <ligand>
        <name>Mg(2+)</name>
        <dbReference type="ChEBI" id="CHEBI:18420"/>
    </ligand>
</feature>
<feature type="binding site" evidence="1">
    <location>
        <position position="127"/>
    </location>
    <ligand>
        <name>deamido-NAD(+)</name>
        <dbReference type="ChEBI" id="CHEBI:58437"/>
    </ligand>
</feature>
<feature type="binding site" evidence="1">
    <location>
        <position position="147"/>
    </location>
    <ligand>
        <name>ATP</name>
        <dbReference type="ChEBI" id="CHEBI:30616"/>
    </ligand>
</feature>
<feature type="binding site" evidence="1">
    <location>
        <position position="152"/>
    </location>
    <ligand>
        <name>Mg(2+)</name>
        <dbReference type="ChEBI" id="CHEBI:18420"/>
    </ligand>
</feature>
<feature type="binding site" evidence="1">
    <location>
        <position position="167"/>
    </location>
    <ligand>
        <name>deamido-NAD(+)</name>
        <dbReference type="ChEBI" id="CHEBI:58437"/>
    </ligand>
</feature>
<feature type="binding site" evidence="1">
    <location>
        <position position="176"/>
    </location>
    <ligand>
        <name>ATP</name>
        <dbReference type="ChEBI" id="CHEBI:30616"/>
    </ligand>
</feature>
<feature type="binding site" evidence="1">
    <location>
        <position position="199"/>
    </location>
    <ligand>
        <name>ATP</name>
        <dbReference type="ChEBI" id="CHEBI:30616"/>
    </ligand>
</feature>
<name>NADE_METKA</name>
<reference key="1">
    <citation type="journal article" date="2002" name="Proc. Natl. Acad. Sci. U.S.A.">
        <title>The complete genome of hyperthermophile Methanopyrus kandleri AV19 and monophyly of archaeal methanogens.</title>
        <authorList>
            <person name="Slesarev A.I."/>
            <person name="Mezhevaya K.V."/>
            <person name="Makarova K.S."/>
            <person name="Polushin N.N."/>
            <person name="Shcherbinina O.V."/>
            <person name="Shakhova V.V."/>
            <person name="Belova G.I."/>
            <person name="Aravind L."/>
            <person name="Natale D.A."/>
            <person name="Rogozin I.B."/>
            <person name="Tatusov R.L."/>
            <person name="Wolf Y.I."/>
            <person name="Stetter K.O."/>
            <person name="Malykh A.G."/>
            <person name="Koonin E.V."/>
            <person name="Kozyavkin S.A."/>
        </authorList>
    </citation>
    <scope>NUCLEOTIDE SEQUENCE [LARGE SCALE GENOMIC DNA]</scope>
    <source>
        <strain>AV19 / DSM 6324 / JCM 9639 / NBRC 100938</strain>
    </source>
</reference>
<comment type="function">
    <text evidence="1">Catalyzes the ATP-dependent amidation of deamido-NAD to form NAD. Uses ammonia as a nitrogen source.</text>
</comment>
<comment type="catalytic activity">
    <reaction evidence="1">
        <text>deamido-NAD(+) + NH4(+) + ATP = AMP + diphosphate + NAD(+) + H(+)</text>
        <dbReference type="Rhea" id="RHEA:21188"/>
        <dbReference type="ChEBI" id="CHEBI:15378"/>
        <dbReference type="ChEBI" id="CHEBI:28938"/>
        <dbReference type="ChEBI" id="CHEBI:30616"/>
        <dbReference type="ChEBI" id="CHEBI:33019"/>
        <dbReference type="ChEBI" id="CHEBI:57540"/>
        <dbReference type="ChEBI" id="CHEBI:58437"/>
        <dbReference type="ChEBI" id="CHEBI:456215"/>
        <dbReference type="EC" id="6.3.1.5"/>
    </reaction>
</comment>
<comment type="pathway">
    <text evidence="1">Cofactor biosynthesis; NAD(+) biosynthesis; NAD(+) from deamido-NAD(+) (ammonia route): step 1/1.</text>
</comment>
<comment type="subunit">
    <text evidence="1">Homodimer.</text>
</comment>
<comment type="similarity">
    <text evidence="1">Belongs to the NAD synthetase family.</text>
</comment>
<gene>
    <name evidence="1" type="primary">nadE</name>
    <name type="ordered locus">MK1418</name>
</gene>
<proteinExistence type="inferred from homology"/>
<protein>
    <recommendedName>
        <fullName evidence="1">NH(3)-dependent NAD(+) synthetase</fullName>
        <ecNumber evidence="1">6.3.1.5</ecNumber>
    </recommendedName>
</protein>
<accession>Q8TVH1</accession>
<keyword id="KW-0067">ATP-binding</keyword>
<keyword id="KW-0436">Ligase</keyword>
<keyword id="KW-0460">Magnesium</keyword>
<keyword id="KW-0479">Metal-binding</keyword>
<keyword id="KW-0520">NAD</keyword>
<keyword id="KW-0547">Nucleotide-binding</keyword>
<keyword id="KW-1185">Reference proteome</keyword>
<dbReference type="EC" id="6.3.1.5" evidence="1"/>
<dbReference type="EMBL" id="AE009439">
    <property type="protein sequence ID" value="AAM02631.1"/>
    <property type="molecule type" value="Genomic_DNA"/>
</dbReference>
<dbReference type="RefSeq" id="WP_011019786.1">
    <property type="nucleotide sequence ID" value="NC_003551.1"/>
</dbReference>
<dbReference type="SMR" id="Q8TVH1"/>
<dbReference type="FunCoup" id="Q8TVH1">
    <property type="interactions" value="85"/>
</dbReference>
<dbReference type="STRING" id="190192.MK1418"/>
<dbReference type="PaxDb" id="190192-MK1418"/>
<dbReference type="EnsemblBacteria" id="AAM02631">
    <property type="protein sequence ID" value="AAM02631"/>
    <property type="gene ID" value="MK1418"/>
</dbReference>
<dbReference type="GeneID" id="1478013"/>
<dbReference type="KEGG" id="mka:MK1418"/>
<dbReference type="PATRIC" id="fig|190192.8.peg.1574"/>
<dbReference type="HOGENOM" id="CLU_059327_1_1_2"/>
<dbReference type="InParanoid" id="Q8TVH1"/>
<dbReference type="OrthoDB" id="39312at2157"/>
<dbReference type="UniPathway" id="UPA00253">
    <property type="reaction ID" value="UER00333"/>
</dbReference>
<dbReference type="Proteomes" id="UP000001826">
    <property type="component" value="Chromosome"/>
</dbReference>
<dbReference type="GO" id="GO:0005737">
    <property type="term" value="C:cytoplasm"/>
    <property type="evidence" value="ECO:0007669"/>
    <property type="project" value="InterPro"/>
</dbReference>
<dbReference type="GO" id="GO:0005524">
    <property type="term" value="F:ATP binding"/>
    <property type="evidence" value="ECO:0007669"/>
    <property type="project" value="UniProtKB-UniRule"/>
</dbReference>
<dbReference type="GO" id="GO:0004359">
    <property type="term" value="F:glutaminase activity"/>
    <property type="evidence" value="ECO:0007669"/>
    <property type="project" value="InterPro"/>
</dbReference>
<dbReference type="GO" id="GO:0046872">
    <property type="term" value="F:metal ion binding"/>
    <property type="evidence" value="ECO:0007669"/>
    <property type="project" value="UniProtKB-KW"/>
</dbReference>
<dbReference type="GO" id="GO:0003952">
    <property type="term" value="F:NAD+ synthase (glutamine-hydrolyzing) activity"/>
    <property type="evidence" value="ECO:0007669"/>
    <property type="project" value="InterPro"/>
</dbReference>
<dbReference type="GO" id="GO:0008795">
    <property type="term" value="F:NAD+ synthase activity"/>
    <property type="evidence" value="ECO:0007669"/>
    <property type="project" value="UniProtKB-UniRule"/>
</dbReference>
<dbReference type="GO" id="GO:0009435">
    <property type="term" value="P:NAD biosynthetic process"/>
    <property type="evidence" value="ECO:0007669"/>
    <property type="project" value="UniProtKB-UniRule"/>
</dbReference>
<dbReference type="CDD" id="cd00553">
    <property type="entry name" value="NAD_synthase"/>
    <property type="match status" value="1"/>
</dbReference>
<dbReference type="FunFam" id="3.40.50.620:FF:000106">
    <property type="entry name" value="Glutamine-dependent NAD(+) synthetase"/>
    <property type="match status" value="1"/>
</dbReference>
<dbReference type="Gene3D" id="3.40.50.620">
    <property type="entry name" value="HUPs"/>
    <property type="match status" value="1"/>
</dbReference>
<dbReference type="HAMAP" id="MF_00193">
    <property type="entry name" value="NadE_ammonia_dep"/>
    <property type="match status" value="1"/>
</dbReference>
<dbReference type="InterPro" id="IPR022310">
    <property type="entry name" value="NAD/GMP_synthase"/>
</dbReference>
<dbReference type="InterPro" id="IPR003694">
    <property type="entry name" value="NAD_synthase"/>
</dbReference>
<dbReference type="InterPro" id="IPR022926">
    <property type="entry name" value="NH(3)-dep_NAD(+)_synth"/>
</dbReference>
<dbReference type="InterPro" id="IPR014729">
    <property type="entry name" value="Rossmann-like_a/b/a_fold"/>
</dbReference>
<dbReference type="NCBIfam" id="TIGR00552">
    <property type="entry name" value="nadE"/>
    <property type="match status" value="1"/>
</dbReference>
<dbReference type="NCBIfam" id="NF010587">
    <property type="entry name" value="PRK13980.1"/>
    <property type="match status" value="1"/>
</dbReference>
<dbReference type="PANTHER" id="PTHR23090:SF9">
    <property type="entry name" value="GLUTAMINE-DEPENDENT NAD(+) SYNTHETASE"/>
    <property type="match status" value="1"/>
</dbReference>
<dbReference type="PANTHER" id="PTHR23090">
    <property type="entry name" value="NH 3 /GLUTAMINE-DEPENDENT NAD + SYNTHETASE"/>
    <property type="match status" value="1"/>
</dbReference>
<dbReference type="Pfam" id="PF02540">
    <property type="entry name" value="NAD_synthase"/>
    <property type="match status" value="1"/>
</dbReference>
<dbReference type="SUPFAM" id="SSF52402">
    <property type="entry name" value="Adenine nucleotide alpha hydrolases-like"/>
    <property type="match status" value="1"/>
</dbReference>
<evidence type="ECO:0000255" key="1">
    <source>
        <dbReference type="HAMAP-Rule" id="MF_00193"/>
    </source>
</evidence>
<evidence type="ECO:0000256" key="2">
    <source>
        <dbReference type="SAM" id="MobiDB-lite"/>
    </source>
</evidence>
<organism>
    <name type="scientific">Methanopyrus kandleri (strain AV19 / DSM 6324 / JCM 9639 / NBRC 100938)</name>
    <dbReference type="NCBI Taxonomy" id="190192"/>
    <lineage>
        <taxon>Archaea</taxon>
        <taxon>Methanobacteriati</taxon>
        <taxon>Methanobacteriota</taxon>
        <taxon>Methanomada group</taxon>
        <taxon>Methanopyri</taxon>
        <taxon>Methanopyrales</taxon>
        <taxon>Methanopyraceae</taxon>
        <taxon>Methanopyrus</taxon>
    </lineage>
</organism>
<sequence length="284" mass="31191">MAKYEPVIPELEVNPEGEVSKIAEFLRGKFEEAGREIAVVGLSGGVDSSTTLGLAVEALGRENVVALILPERDTPEEDVEDAVEAAERFGVEYHVHDITEVLRAFGTGSYVPCHPFSRKSDANLKPRVRMCVLYYFANELDGLVLGTGNRTEWLTGYFTLHGDGACDVAPIRHLYKTQVYVIAEHLGVPERIVEEKEPSARLWPGQTDEGELGIDYPTLDALLYALVDEGLGPRKAVDWLGERGVEATEEDAEKVLDLVRSSSFKRRPAPGLDLPEPEDPAMSG</sequence>